<gene>
    <name type="primary">cav-1</name>
    <name type="ORF">T13F2.8</name>
</gene>
<feature type="chain" id="PRO_0000144143" description="Caveolin-1">
    <location>
        <begin position="1"/>
        <end position="235"/>
    </location>
</feature>
<feature type="topological domain" description="Cytoplasmic" evidence="2">
    <location>
        <begin position="1"/>
        <end position="161"/>
    </location>
</feature>
<feature type="intramembrane region" description="Helical" evidence="2">
    <location>
        <begin position="162"/>
        <end position="182"/>
    </location>
</feature>
<feature type="topological domain" description="Cytoplasmic" evidence="2">
    <location>
        <begin position="183"/>
        <end position="235"/>
    </location>
</feature>
<feature type="region of interest" description="Disordered" evidence="3">
    <location>
        <begin position="29"/>
        <end position="72"/>
    </location>
</feature>
<feature type="lipid moiety-binding region" description="S-palmitoyl cysteine" evidence="2">
    <location>
        <position position="234"/>
    </location>
</feature>
<protein>
    <recommendedName>
        <fullName>Caveolin-1</fullName>
    </recommendedName>
</protein>
<accession>Q94051</accession>
<proteinExistence type="evidence at transcript level"/>
<comment type="function">
    <text>May act as a scaffolding protein within caveolar membranes. Interacts directly with G-protein alpha subunits and can functionally regulate their activity.</text>
</comment>
<comment type="subunit">
    <text>Homooligomer containing 14-16 monomers per oligomer.</text>
</comment>
<comment type="subcellular location">
    <subcellularLocation>
        <location evidence="1">Golgi apparatus membrane</location>
        <topology evidence="1">Peripheral membrane protein</topology>
    </subcellularLocation>
    <subcellularLocation>
        <location evidence="1">Cell membrane</location>
        <topology evidence="1">Peripheral membrane protein</topology>
    </subcellularLocation>
    <subcellularLocation>
        <location evidence="1">Membrane</location>
        <location evidence="1">Caveola</location>
        <topology evidence="1">Peripheral membrane protein</topology>
    </subcellularLocation>
    <text evidence="1">Potential hairpin-like structure in the membrane. Membrane protein of caveolae (By similarity).</text>
</comment>
<comment type="similarity">
    <text evidence="4">Belongs to the caveolin family.</text>
</comment>
<evidence type="ECO:0000250" key="1"/>
<evidence type="ECO:0000255" key="2"/>
<evidence type="ECO:0000256" key="3">
    <source>
        <dbReference type="SAM" id="MobiDB-lite"/>
    </source>
</evidence>
<evidence type="ECO:0000305" key="4"/>
<keyword id="KW-1003">Cell membrane</keyword>
<keyword id="KW-0333">Golgi apparatus</keyword>
<keyword id="KW-0449">Lipoprotein</keyword>
<keyword id="KW-0472">Membrane</keyword>
<keyword id="KW-0564">Palmitate</keyword>
<keyword id="KW-1185">Reference proteome</keyword>
<reference key="1">
    <citation type="journal article" date="1997" name="J. Biol. Chem.">
        <title>Identification, sequence, and expression of an invertebrate caveolin gene family from the nematode Caenorhabditis elegans. Implications for the molecular evolution of mammalian caveolin genes.</title>
        <authorList>
            <person name="Tang Z."/>
            <person name="Okamoto T."/>
            <person name="Boontrakulpoontawee P."/>
            <person name="Katada T."/>
            <person name="Otsuka A.J."/>
            <person name="Lisanti M.P."/>
        </authorList>
    </citation>
    <scope>NUCLEOTIDE SEQUENCE [MRNA]</scope>
    <source>
        <strain>Bristol N2</strain>
    </source>
</reference>
<reference key="2">
    <citation type="journal article" date="1998" name="Science">
        <title>Genome sequence of the nematode C. elegans: a platform for investigating biology.</title>
        <authorList>
            <consortium name="The C. elegans sequencing consortium"/>
        </authorList>
    </citation>
    <scope>NUCLEOTIDE SEQUENCE [LARGE SCALE GENOMIC DNA]</scope>
    <source>
        <strain>Bristol N2</strain>
    </source>
</reference>
<name>CAV1_CAEEL</name>
<sequence length="235" mass="26291">MSTEQDIKTEEQIPLTYAAVAAPTVQTEGEAVVAPEEPKPKKNWFTFGKKKAAPTDETNIEEGGAPGDEPVKEKKEKKCWWSRCQKGEGEQKEENIAIGVDLVNRDANSMNNHVQLNFEDIFGEADSQHSWDCVWRLNHTVFTAVRLFIYRLVSLLALPFTIIFAIFFGLLASINVFIIVPLGKLLSIPGTLLAKLWNWLIHAIFDPIASAVGLIFSNFNIRKYGINQETTAPCV</sequence>
<dbReference type="EMBL" id="U66405">
    <property type="protein sequence ID" value="AAB48388.1"/>
    <property type="molecule type" value="mRNA"/>
</dbReference>
<dbReference type="EMBL" id="Z81122">
    <property type="protein sequence ID" value="CAB03359.1"/>
    <property type="molecule type" value="Genomic_DNA"/>
</dbReference>
<dbReference type="PIR" id="T24882">
    <property type="entry name" value="T24882"/>
</dbReference>
<dbReference type="RefSeq" id="NP_001255421.1">
    <property type="nucleotide sequence ID" value="NM_001268492.4"/>
</dbReference>
<dbReference type="SMR" id="Q94051"/>
<dbReference type="BioGRID" id="42919">
    <property type="interactions" value="7"/>
</dbReference>
<dbReference type="FunCoup" id="Q94051">
    <property type="interactions" value="173"/>
</dbReference>
<dbReference type="STRING" id="6239.T13F2.8a.1"/>
<dbReference type="iPTMnet" id="Q94051"/>
<dbReference type="PaxDb" id="6239-T13F2.8c"/>
<dbReference type="PeptideAtlas" id="Q94051"/>
<dbReference type="EnsemblMetazoa" id="T13F2.8a.1">
    <property type="protein sequence ID" value="T13F2.8a.1"/>
    <property type="gene ID" value="WBGene00000301"/>
</dbReference>
<dbReference type="GeneID" id="177815"/>
<dbReference type="KEGG" id="cel:CELE_T13F2.8"/>
<dbReference type="UCSC" id="T13F2.8">
    <property type="organism name" value="c. elegans"/>
</dbReference>
<dbReference type="AGR" id="WB:WBGene00000301"/>
<dbReference type="CTD" id="177815"/>
<dbReference type="WormBase" id="T13F2.8a">
    <property type="protein sequence ID" value="CE13633"/>
    <property type="gene ID" value="WBGene00000301"/>
    <property type="gene designation" value="cav-1"/>
</dbReference>
<dbReference type="eggNOG" id="ENOG502QUK5">
    <property type="taxonomic scope" value="Eukaryota"/>
</dbReference>
<dbReference type="GeneTree" id="ENSGT00950000183006"/>
<dbReference type="HOGENOM" id="CLU_1220990_0_0_1"/>
<dbReference type="InParanoid" id="Q94051"/>
<dbReference type="OMA" id="WMVGPCV"/>
<dbReference type="OrthoDB" id="5917823at2759"/>
<dbReference type="PhylomeDB" id="Q94051"/>
<dbReference type="Reactome" id="R-CEL-210991">
    <property type="pathway name" value="Basigin interactions"/>
</dbReference>
<dbReference type="Reactome" id="R-CEL-4641262">
    <property type="pathway name" value="Disassembly of the destruction complex and recruitment of AXIN to the membrane"/>
</dbReference>
<dbReference type="Reactome" id="R-CEL-8980692">
    <property type="pathway name" value="RHOA GTPase cycle"/>
</dbReference>
<dbReference type="Reactome" id="R-CEL-9013026">
    <property type="pathway name" value="RHOB GTPase cycle"/>
</dbReference>
<dbReference type="Reactome" id="R-CEL-9013148">
    <property type="pathway name" value="CDC42 GTPase cycle"/>
</dbReference>
<dbReference type="Reactome" id="R-CEL-9013149">
    <property type="pathway name" value="RAC1 GTPase cycle"/>
</dbReference>
<dbReference type="Reactome" id="R-CEL-9013404">
    <property type="pathway name" value="RAC2 GTPase cycle"/>
</dbReference>
<dbReference type="Reactome" id="R-CEL-9013405">
    <property type="pathway name" value="RHOD GTPase cycle"/>
</dbReference>
<dbReference type="Reactome" id="R-CEL-9013406">
    <property type="pathway name" value="RHOQ GTPase cycle"/>
</dbReference>
<dbReference type="Reactome" id="R-CEL-9013407">
    <property type="pathway name" value="RHOH GTPase cycle"/>
</dbReference>
<dbReference type="Reactome" id="R-CEL-9013408">
    <property type="pathway name" value="RHOG GTPase cycle"/>
</dbReference>
<dbReference type="Reactome" id="R-CEL-9013423">
    <property type="pathway name" value="RAC3 GTPase cycle"/>
</dbReference>
<dbReference type="Reactome" id="R-CEL-9035034">
    <property type="pathway name" value="RHOF GTPase cycle"/>
</dbReference>
<dbReference type="PRO" id="PR:Q94051"/>
<dbReference type="Proteomes" id="UP000001940">
    <property type="component" value="Chromosome IV"/>
</dbReference>
<dbReference type="Bgee" id="WBGene00000301">
    <property type="expression patterns" value="Expressed in embryo and 4 other cell types or tissues"/>
</dbReference>
<dbReference type="ExpressionAtlas" id="Q94051">
    <property type="expression patterns" value="baseline and differential"/>
</dbReference>
<dbReference type="GO" id="GO:0005901">
    <property type="term" value="C:caveola"/>
    <property type="evidence" value="ECO:0000304"/>
    <property type="project" value="WormBase"/>
</dbReference>
<dbReference type="GO" id="GO:0005938">
    <property type="term" value="C:cell cortex"/>
    <property type="evidence" value="ECO:0000314"/>
    <property type="project" value="WormBase"/>
</dbReference>
<dbReference type="GO" id="GO:0060473">
    <property type="term" value="C:cortical granule"/>
    <property type="evidence" value="ECO:0000314"/>
    <property type="project" value="WormBase"/>
</dbReference>
<dbReference type="GO" id="GO:0009898">
    <property type="term" value="C:cytoplasmic side of plasma membrane"/>
    <property type="evidence" value="ECO:0000314"/>
    <property type="project" value="WormBase"/>
</dbReference>
<dbReference type="GO" id="GO:0000139">
    <property type="term" value="C:Golgi membrane"/>
    <property type="evidence" value="ECO:0007669"/>
    <property type="project" value="UniProtKB-SubCell"/>
</dbReference>
<dbReference type="GO" id="GO:0045121">
    <property type="term" value="C:membrane raft"/>
    <property type="evidence" value="ECO:0007005"/>
    <property type="project" value="WormBase"/>
</dbReference>
<dbReference type="GO" id="GO:0048471">
    <property type="term" value="C:perinuclear region of cytoplasm"/>
    <property type="evidence" value="ECO:0000314"/>
    <property type="project" value="WormBase"/>
</dbReference>
<dbReference type="GO" id="GO:0005886">
    <property type="term" value="C:plasma membrane"/>
    <property type="evidence" value="ECO:0000314"/>
    <property type="project" value="WormBase"/>
</dbReference>
<dbReference type="GO" id="GO:0030133">
    <property type="term" value="C:transport vesicle"/>
    <property type="evidence" value="ECO:0000314"/>
    <property type="project" value="WormBase"/>
</dbReference>
<dbReference type="GO" id="GO:0060090">
    <property type="term" value="F:molecular adaptor activity"/>
    <property type="evidence" value="ECO:0000250"/>
    <property type="project" value="WormBase"/>
</dbReference>
<dbReference type="GO" id="GO:0070836">
    <property type="term" value="P:caveola assembly"/>
    <property type="evidence" value="ECO:0000318"/>
    <property type="project" value="GO_Central"/>
</dbReference>
<dbReference type="GO" id="GO:0051321">
    <property type="term" value="P:meiotic cell cycle"/>
    <property type="evidence" value="ECO:0000315"/>
    <property type="project" value="WormBase"/>
</dbReference>
<dbReference type="GO" id="GO:0007265">
    <property type="term" value="P:Ras protein signal transduction"/>
    <property type="evidence" value="ECO:0000316"/>
    <property type="project" value="WormBase"/>
</dbReference>
<dbReference type="GO" id="GO:0046662">
    <property type="term" value="P:regulation of egg-laying behavior"/>
    <property type="evidence" value="ECO:0000316"/>
    <property type="project" value="WormBase"/>
</dbReference>
<dbReference type="InterPro" id="IPR001612">
    <property type="entry name" value="Caveolin"/>
</dbReference>
<dbReference type="PANTHER" id="PTHR10844">
    <property type="entry name" value="CAVEOLIN"/>
    <property type="match status" value="1"/>
</dbReference>
<dbReference type="PANTHER" id="PTHR10844:SF21">
    <property type="entry name" value="CAVEOLIN-1"/>
    <property type="match status" value="1"/>
</dbReference>
<dbReference type="Pfam" id="PF01146">
    <property type="entry name" value="Caveolin"/>
    <property type="match status" value="1"/>
</dbReference>
<organism>
    <name type="scientific">Caenorhabditis elegans</name>
    <dbReference type="NCBI Taxonomy" id="6239"/>
    <lineage>
        <taxon>Eukaryota</taxon>
        <taxon>Metazoa</taxon>
        <taxon>Ecdysozoa</taxon>
        <taxon>Nematoda</taxon>
        <taxon>Chromadorea</taxon>
        <taxon>Rhabditida</taxon>
        <taxon>Rhabditina</taxon>
        <taxon>Rhabditomorpha</taxon>
        <taxon>Rhabditoidea</taxon>
        <taxon>Rhabditidae</taxon>
        <taxon>Peloderinae</taxon>
        <taxon>Caenorhabditis</taxon>
    </lineage>
</organism>